<protein>
    <recommendedName>
        <fullName>Uncharacterized protein YflD</fullName>
    </recommendedName>
</protein>
<organism>
    <name type="scientific">Bacillus subtilis (strain 168)</name>
    <dbReference type="NCBI Taxonomy" id="224308"/>
    <lineage>
        <taxon>Bacteria</taxon>
        <taxon>Bacillati</taxon>
        <taxon>Bacillota</taxon>
        <taxon>Bacilli</taxon>
        <taxon>Bacillales</taxon>
        <taxon>Bacillaceae</taxon>
        <taxon>Bacillus</taxon>
    </lineage>
</organism>
<accession>O34489</accession>
<keyword id="KW-1185">Reference proteome</keyword>
<proteinExistence type="predicted"/>
<dbReference type="EMBL" id="D86417">
    <property type="protein sequence ID" value="BAA22297.1"/>
    <property type="molecule type" value="Genomic_DNA"/>
</dbReference>
<dbReference type="EMBL" id="AL009126">
    <property type="protein sequence ID" value="CAB12601.1"/>
    <property type="molecule type" value="Genomic_DNA"/>
</dbReference>
<dbReference type="PIR" id="B69810">
    <property type="entry name" value="B69810"/>
</dbReference>
<dbReference type="RefSeq" id="NP_388653.1">
    <property type="nucleotide sequence ID" value="NC_000964.3"/>
</dbReference>
<dbReference type="RefSeq" id="WP_010886442.1">
    <property type="nucleotide sequence ID" value="NZ_OZ025638.1"/>
</dbReference>
<dbReference type="SMR" id="O34489"/>
<dbReference type="FunCoup" id="O34489">
    <property type="interactions" value="4"/>
</dbReference>
<dbReference type="STRING" id="224308.BSU07720"/>
<dbReference type="PaxDb" id="224308-BSU07720"/>
<dbReference type="EnsemblBacteria" id="CAB12601">
    <property type="protein sequence ID" value="CAB12601"/>
    <property type="gene ID" value="BSU_07720"/>
</dbReference>
<dbReference type="GeneID" id="936125"/>
<dbReference type="KEGG" id="bsu:BSU07720"/>
<dbReference type="InParanoid" id="O34489"/>
<dbReference type="OrthoDB" id="9861233at2"/>
<dbReference type="BioCyc" id="BSUB:BSU07720-MONOMER"/>
<dbReference type="Proteomes" id="UP000001570">
    <property type="component" value="Chromosome"/>
</dbReference>
<name>YFLD_BACSU</name>
<gene>
    <name type="primary">yflD</name>
    <name type="ordered locus">BSU07720</name>
</gene>
<sequence>MREKVAKNAVESTFRFDITKCKTRYLSRNKGIKWYIENCMIKYKV</sequence>
<reference key="1">
    <citation type="journal article" date="1997" name="Gene">
        <title>Cloning and sequencing of a 35.7 kb in the 70 degree-73 degree region of the Bacillus subtilis genome reveal genes for a new two-component system, three spore germination proteins, an iron uptake system and a general stress response protein.</title>
        <authorList>
            <person name="Yamamoto H."/>
            <person name="Uchiyama S."/>
            <person name="Nugroho F.A."/>
            <person name="Sekiguchi J."/>
        </authorList>
    </citation>
    <scope>NUCLEOTIDE SEQUENCE [GENOMIC DNA]</scope>
    <source>
        <strain>168 / AC327</strain>
    </source>
</reference>
<reference key="2">
    <citation type="journal article" date="1997" name="Nature">
        <title>The complete genome sequence of the Gram-positive bacterium Bacillus subtilis.</title>
        <authorList>
            <person name="Kunst F."/>
            <person name="Ogasawara N."/>
            <person name="Moszer I."/>
            <person name="Albertini A.M."/>
            <person name="Alloni G."/>
            <person name="Azevedo V."/>
            <person name="Bertero M.G."/>
            <person name="Bessieres P."/>
            <person name="Bolotin A."/>
            <person name="Borchert S."/>
            <person name="Borriss R."/>
            <person name="Boursier L."/>
            <person name="Brans A."/>
            <person name="Braun M."/>
            <person name="Brignell S.C."/>
            <person name="Bron S."/>
            <person name="Brouillet S."/>
            <person name="Bruschi C.V."/>
            <person name="Caldwell B."/>
            <person name="Capuano V."/>
            <person name="Carter N.M."/>
            <person name="Choi S.-K."/>
            <person name="Codani J.-J."/>
            <person name="Connerton I.F."/>
            <person name="Cummings N.J."/>
            <person name="Daniel R.A."/>
            <person name="Denizot F."/>
            <person name="Devine K.M."/>
            <person name="Duesterhoeft A."/>
            <person name="Ehrlich S.D."/>
            <person name="Emmerson P.T."/>
            <person name="Entian K.-D."/>
            <person name="Errington J."/>
            <person name="Fabret C."/>
            <person name="Ferrari E."/>
            <person name="Foulger D."/>
            <person name="Fritz C."/>
            <person name="Fujita M."/>
            <person name="Fujita Y."/>
            <person name="Fuma S."/>
            <person name="Galizzi A."/>
            <person name="Galleron N."/>
            <person name="Ghim S.-Y."/>
            <person name="Glaser P."/>
            <person name="Goffeau A."/>
            <person name="Golightly E.J."/>
            <person name="Grandi G."/>
            <person name="Guiseppi G."/>
            <person name="Guy B.J."/>
            <person name="Haga K."/>
            <person name="Haiech J."/>
            <person name="Harwood C.R."/>
            <person name="Henaut A."/>
            <person name="Hilbert H."/>
            <person name="Holsappel S."/>
            <person name="Hosono S."/>
            <person name="Hullo M.-F."/>
            <person name="Itaya M."/>
            <person name="Jones L.-M."/>
            <person name="Joris B."/>
            <person name="Karamata D."/>
            <person name="Kasahara Y."/>
            <person name="Klaerr-Blanchard M."/>
            <person name="Klein C."/>
            <person name="Kobayashi Y."/>
            <person name="Koetter P."/>
            <person name="Koningstein G."/>
            <person name="Krogh S."/>
            <person name="Kumano M."/>
            <person name="Kurita K."/>
            <person name="Lapidus A."/>
            <person name="Lardinois S."/>
            <person name="Lauber J."/>
            <person name="Lazarevic V."/>
            <person name="Lee S.-M."/>
            <person name="Levine A."/>
            <person name="Liu H."/>
            <person name="Masuda S."/>
            <person name="Mauel C."/>
            <person name="Medigue C."/>
            <person name="Medina N."/>
            <person name="Mellado R.P."/>
            <person name="Mizuno M."/>
            <person name="Moestl D."/>
            <person name="Nakai S."/>
            <person name="Noback M."/>
            <person name="Noone D."/>
            <person name="O'Reilly M."/>
            <person name="Ogawa K."/>
            <person name="Ogiwara A."/>
            <person name="Oudega B."/>
            <person name="Park S.-H."/>
            <person name="Parro V."/>
            <person name="Pohl T.M."/>
            <person name="Portetelle D."/>
            <person name="Porwollik S."/>
            <person name="Prescott A.M."/>
            <person name="Presecan E."/>
            <person name="Pujic P."/>
            <person name="Purnelle B."/>
            <person name="Rapoport G."/>
            <person name="Rey M."/>
            <person name="Reynolds S."/>
            <person name="Rieger M."/>
            <person name="Rivolta C."/>
            <person name="Rocha E."/>
            <person name="Roche B."/>
            <person name="Rose M."/>
            <person name="Sadaie Y."/>
            <person name="Sato T."/>
            <person name="Scanlan E."/>
            <person name="Schleich S."/>
            <person name="Schroeter R."/>
            <person name="Scoffone F."/>
            <person name="Sekiguchi J."/>
            <person name="Sekowska A."/>
            <person name="Seror S.J."/>
            <person name="Serror P."/>
            <person name="Shin B.-S."/>
            <person name="Soldo B."/>
            <person name="Sorokin A."/>
            <person name="Tacconi E."/>
            <person name="Takagi T."/>
            <person name="Takahashi H."/>
            <person name="Takemaru K."/>
            <person name="Takeuchi M."/>
            <person name="Tamakoshi A."/>
            <person name="Tanaka T."/>
            <person name="Terpstra P."/>
            <person name="Tognoni A."/>
            <person name="Tosato V."/>
            <person name="Uchiyama S."/>
            <person name="Vandenbol M."/>
            <person name="Vannier F."/>
            <person name="Vassarotti A."/>
            <person name="Viari A."/>
            <person name="Wambutt R."/>
            <person name="Wedler E."/>
            <person name="Wedler H."/>
            <person name="Weitzenegger T."/>
            <person name="Winters P."/>
            <person name="Wipat A."/>
            <person name="Yamamoto H."/>
            <person name="Yamane K."/>
            <person name="Yasumoto K."/>
            <person name="Yata K."/>
            <person name="Yoshida K."/>
            <person name="Yoshikawa H.-F."/>
            <person name="Zumstein E."/>
            <person name="Yoshikawa H."/>
            <person name="Danchin A."/>
        </authorList>
    </citation>
    <scope>NUCLEOTIDE SEQUENCE [LARGE SCALE GENOMIC DNA]</scope>
    <source>
        <strain>168</strain>
    </source>
</reference>
<feature type="chain" id="PRO_0000049533" description="Uncharacterized protein YflD">
    <location>
        <begin position="1"/>
        <end position="45"/>
    </location>
</feature>